<keyword id="KW-1003">Cell membrane</keyword>
<keyword id="KW-0961">Cell wall biogenesis/degradation</keyword>
<keyword id="KW-0472">Membrane</keyword>
<keyword id="KW-1185">Reference proteome</keyword>
<keyword id="KW-0812">Transmembrane</keyword>
<keyword id="KW-1133">Transmembrane helix</keyword>
<keyword id="KW-0813">Transport</keyword>
<organism>
    <name type="scientific">Bacillus subtilis (strain 168)</name>
    <dbReference type="NCBI Taxonomy" id="224308"/>
    <lineage>
        <taxon>Bacteria</taxon>
        <taxon>Bacillati</taxon>
        <taxon>Bacillota</taxon>
        <taxon>Bacilli</taxon>
        <taxon>Bacillales</taxon>
        <taxon>Bacillaceae</taxon>
        <taxon>Bacillus</taxon>
    </lineage>
</organism>
<sequence>MGSLISEILTWLTNMGYAGIAIGLMIEIIPSEIVLAYGGYMVSEGTIGFIGAIIAGVIGGTIAQIFIYWIGRYGGRPFLDKYGKYLLIKKHHIDMSENWFQKYGAGVVFSARFIPVVRHAISIPAGIARMPFLKFVVLTVLAIIPWSILFVYLGIQLGSQWDDVENIAGTYTTPIMILAVVVIALYFVIKKRTAIFKR</sequence>
<evidence type="ECO:0000255" key="1"/>
<evidence type="ECO:0000269" key="2">
    <source>
    </source>
</evidence>
<evidence type="ECO:0000303" key="3">
    <source>
    </source>
</evidence>
<evidence type="ECO:0000305" key="4"/>
<evidence type="ECO:0000305" key="5">
    <source>
    </source>
</evidence>
<gene>
    <name evidence="3" type="primary">uptA</name>
    <name type="synonym">yngC</name>
    <name type="ordered locus">BSU18190</name>
</gene>
<feature type="chain" id="PRO_0000161423" description="Undecaprenyl phosphate transporter A">
    <location>
        <begin position="1"/>
        <end position="198"/>
    </location>
</feature>
<feature type="transmembrane region" description="Helical" evidence="1">
    <location>
        <begin position="15"/>
        <end position="35"/>
    </location>
</feature>
<feature type="transmembrane region" description="Helical" evidence="1">
    <location>
        <begin position="47"/>
        <end position="67"/>
    </location>
</feature>
<feature type="transmembrane region" description="Helical" evidence="1">
    <location>
        <begin position="107"/>
        <end position="127"/>
    </location>
</feature>
<feature type="transmembrane region" description="Helical" evidence="1">
    <location>
        <begin position="135"/>
        <end position="155"/>
    </location>
</feature>
<feature type="transmembrane region" description="Helical" evidence="1">
    <location>
        <begin position="169"/>
        <end position="189"/>
    </location>
</feature>
<dbReference type="EMBL" id="AL009126">
    <property type="protein sequence ID" value="CAB13702.1"/>
    <property type="molecule type" value="Genomic_DNA"/>
</dbReference>
<dbReference type="PIR" id="H69892">
    <property type="entry name" value="H69892"/>
</dbReference>
<dbReference type="RefSeq" id="NP_389701.1">
    <property type="nucleotide sequence ID" value="NC_000964.3"/>
</dbReference>
<dbReference type="RefSeq" id="WP_003231529.1">
    <property type="nucleotide sequence ID" value="NZ_OZ025638.1"/>
</dbReference>
<dbReference type="FunCoup" id="O31823">
    <property type="interactions" value="235"/>
</dbReference>
<dbReference type="STRING" id="224308.BSU18190"/>
<dbReference type="PaxDb" id="224308-BSU18190"/>
<dbReference type="DNASU" id="939567"/>
<dbReference type="EnsemblBacteria" id="CAB13702">
    <property type="protein sequence ID" value="CAB13702"/>
    <property type="gene ID" value="BSU_18190"/>
</dbReference>
<dbReference type="GeneID" id="939567"/>
<dbReference type="KEGG" id="bsu:BSU18190"/>
<dbReference type="PATRIC" id="fig|224308.179.peg.1984"/>
<dbReference type="eggNOG" id="COG0586">
    <property type="taxonomic scope" value="Bacteria"/>
</dbReference>
<dbReference type="InParanoid" id="O31823"/>
<dbReference type="OrthoDB" id="9813426at2"/>
<dbReference type="PhylomeDB" id="O31823"/>
<dbReference type="BioCyc" id="BSUB:BSU18190-MONOMER"/>
<dbReference type="Proteomes" id="UP000001570">
    <property type="component" value="Chromosome"/>
</dbReference>
<dbReference type="GO" id="GO:0005886">
    <property type="term" value="C:plasma membrane"/>
    <property type="evidence" value="ECO:0000318"/>
    <property type="project" value="GO_Central"/>
</dbReference>
<dbReference type="GO" id="GO:0071555">
    <property type="term" value="P:cell wall organization"/>
    <property type="evidence" value="ECO:0007669"/>
    <property type="project" value="UniProtKB-KW"/>
</dbReference>
<dbReference type="InterPro" id="IPR051311">
    <property type="entry name" value="DedA_domain"/>
</dbReference>
<dbReference type="InterPro" id="IPR032816">
    <property type="entry name" value="VTT_dom"/>
</dbReference>
<dbReference type="PANTHER" id="PTHR42709">
    <property type="entry name" value="ALKALINE PHOSPHATASE LIKE PROTEIN"/>
    <property type="match status" value="1"/>
</dbReference>
<dbReference type="PANTHER" id="PTHR42709:SF8">
    <property type="entry name" value="UNDECAPRENYL PHOSPHATE TRANSPORTER A"/>
    <property type="match status" value="1"/>
</dbReference>
<dbReference type="Pfam" id="PF09335">
    <property type="entry name" value="VTT_dom"/>
    <property type="match status" value="1"/>
</dbReference>
<accession>O31823</accession>
<name>UPTA_BACSU</name>
<comment type="function">
    <text evidence="2">Flippase that catalyzes the transport of undecaprenyl phosphate (UndP) across the cytoplasmic membrane, from the external side to the cytoplasmic side (PubMed:36450357). Is involved in UndP recycling during peptidoglycan synthesis (PubMed:36450357).</text>
</comment>
<comment type="subcellular location">
    <subcellularLocation>
        <location evidence="5">Cell membrane</location>
        <topology evidence="1">Multi-pass membrane protein</topology>
    </subcellularLocation>
</comment>
<comment type="induction">
    <text evidence="2">Expression is regulated by the ECF sigma factor SigM.</text>
</comment>
<comment type="disruption phenotype">
    <text evidence="2">Deletion of the gene increases sensitivity to the amphomycin derivative MX2401, which binds UndP in the outer leaflet of the cytoplasmic membrane and prevents its recycling (PubMed:36450357). Deletion of the gene sensitizes B.subtilis to reduced levels of UndP synthesis (PubMed:36450357). The double mutant uptA-ykoX exhibits increased sensitivity to the amphomycin derivative MX2401, but has no discernible growth or morphological defects (PubMed:36450357).</text>
</comment>
<comment type="similarity">
    <text evidence="4">Belongs to the DedA family.</text>
</comment>
<protein>
    <recommendedName>
        <fullName evidence="3">Undecaprenyl phosphate transporter A</fullName>
        <shortName evidence="3">UndP transporter A</shortName>
    </recommendedName>
    <alternativeName>
        <fullName evidence="3">Polyprenyl-phosphate transporter</fullName>
    </alternativeName>
</protein>
<reference key="1">
    <citation type="journal article" date="1997" name="Nature">
        <title>The complete genome sequence of the Gram-positive bacterium Bacillus subtilis.</title>
        <authorList>
            <person name="Kunst F."/>
            <person name="Ogasawara N."/>
            <person name="Moszer I."/>
            <person name="Albertini A.M."/>
            <person name="Alloni G."/>
            <person name="Azevedo V."/>
            <person name="Bertero M.G."/>
            <person name="Bessieres P."/>
            <person name="Bolotin A."/>
            <person name="Borchert S."/>
            <person name="Borriss R."/>
            <person name="Boursier L."/>
            <person name="Brans A."/>
            <person name="Braun M."/>
            <person name="Brignell S.C."/>
            <person name="Bron S."/>
            <person name="Brouillet S."/>
            <person name="Bruschi C.V."/>
            <person name="Caldwell B."/>
            <person name="Capuano V."/>
            <person name="Carter N.M."/>
            <person name="Choi S.-K."/>
            <person name="Codani J.-J."/>
            <person name="Connerton I.F."/>
            <person name="Cummings N.J."/>
            <person name="Daniel R.A."/>
            <person name="Denizot F."/>
            <person name="Devine K.M."/>
            <person name="Duesterhoeft A."/>
            <person name="Ehrlich S.D."/>
            <person name="Emmerson P.T."/>
            <person name="Entian K.-D."/>
            <person name="Errington J."/>
            <person name="Fabret C."/>
            <person name="Ferrari E."/>
            <person name="Foulger D."/>
            <person name="Fritz C."/>
            <person name="Fujita M."/>
            <person name="Fujita Y."/>
            <person name="Fuma S."/>
            <person name="Galizzi A."/>
            <person name="Galleron N."/>
            <person name="Ghim S.-Y."/>
            <person name="Glaser P."/>
            <person name="Goffeau A."/>
            <person name="Golightly E.J."/>
            <person name="Grandi G."/>
            <person name="Guiseppi G."/>
            <person name="Guy B.J."/>
            <person name="Haga K."/>
            <person name="Haiech J."/>
            <person name="Harwood C.R."/>
            <person name="Henaut A."/>
            <person name="Hilbert H."/>
            <person name="Holsappel S."/>
            <person name="Hosono S."/>
            <person name="Hullo M.-F."/>
            <person name="Itaya M."/>
            <person name="Jones L.-M."/>
            <person name="Joris B."/>
            <person name="Karamata D."/>
            <person name="Kasahara Y."/>
            <person name="Klaerr-Blanchard M."/>
            <person name="Klein C."/>
            <person name="Kobayashi Y."/>
            <person name="Koetter P."/>
            <person name="Koningstein G."/>
            <person name="Krogh S."/>
            <person name="Kumano M."/>
            <person name="Kurita K."/>
            <person name="Lapidus A."/>
            <person name="Lardinois S."/>
            <person name="Lauber J."/>
            <person name="Lazarevic V."/>
            <person name="Lee S.-M."/>
            <person name="Levine A."/>
            <person name="Liu H."/>
            <person name="Masuda S."/>
            <person name="Mauel C."/>
            <person name="Medigue C."/>
            <person name="Medina N."/>
            <person name="Mellado R.P."/>
            <person name="Mizuno M."/>
            <person name="Moestl D."/>
            <person name="Nakai S."/>
            <person name="Noback M."/>
            <person name="Noone D."/>
            <person name="O'Reilly M."/>
            <person name="Ogawa K."/>
            <person name="Ogiwara A."/>
            <person name="Oudega B."/>
            <person name="Park S.-H."/>
            <person name="Parro V."/>
            <person name="Pohl T.M."/>
            <person name="Portetelle D."/>
            <person name="Porwollik S."/>
            <person name="Prescott A.M."/>
            <person name="Presecan E."/>
            <person name="Pujic P."/>
            <person name="Purnelle B."/>
            <person name="Rapoport G."/>
            <person name="Rey M."/>
            <person name="Reynolds S."/>
            <person name="Rieger M."/>
            <person name="Rivolta C."/>
            <person name="Rocha E."/>
            <person name="Roche B."/>
            <person name="Rose M."/>
            <person name="Sadaie Y."/>
            <person name="Sato T."/>
            <person name="Scanlan E."/>
            <person name="Schleich S."/>
            <person name="Schroeter R."/>
            <person name="Scoffone F."/>
            <person name="Sekiguchi J."/>
            <person name="Sekowska A."/>
            <person name="Seror S.J."/>
            <person name="Serror P."/>
            <person name="Shin B.-S."/>
            <person name="Soldo B."/>
            <person name="Sorokin A."/>
            <person name="Tacconi E."/>
            <person name="Takagi T."/>
            <person name="Takahashi H."/>
            <person name="Takemaru K."/>
            <person name="Takeuchi M."/>
            <person name="Tamakoshi A."/>
            <person name="Tanaka T."/>
            <person name="Terpstra P."/>
            <person name="Tognoni A."/>
            <person name="Tosato V."/>
            <person name="Uchiyama S."/>
            <person name="Vandenbol M."/>
            <person name="Vannier F."/>
            <person name="Vassarotti A."/>
            <person name="Viari A."/>
            <person name="Wambutt R."/>
            <person name="Wedler E."/>
            <person name="Wedler H."/>
            <person name="Weitzenegger T."/>
            <person name="Winters P."/>
            <person name="Wipat A."/>
            <person name="Yamamoto H."/>
            <person name="Yamane K."/>
            <person name="Yasumoto K."/>
            <person name="Yata K."/>
            <person name="Yoshida K."/>
            <person name="Yoshikawa H.-F."/>
            <person name="Zumstein E."/>
            <person name="Yoshikawa H."/>
            <person name="Danchin A."/>
        </authorList>
    </citation>
    <scope>NUCLEOTIDE SEQUENCE [LARGE SCALE GENOMIC DNA]</scope>
    <source>
        <strain>168</strain>
    </source>
</reference>
<reference key="2">
    <citation type="journal article" date="2023" name="Nature">
        <title>Two broadly conserved families of polyprenyl-phosphate transporters.</title>
        <authorList>
            <person name="Roney I.J."/>
            <person name="Rudner D.Z."/>
        </authorList>
    </citation>
    <scope>FUNCTION</scope>
    <scope>INDUCTION</scope>
    <scope>DISRUPTION PHENOTYPE</scope>
    <source>
        <strain>168 / PY79</strain>
    </source>
</reference>
<proteinExistence type="evidence at transcript level"/>